<proteinExistence type="inferred from homology"/>
<comment type="function">
    <text evidence="1">Deamidates N-terminal Asn and Gln. Component of a targeting complex in the N-end rule pathway (By similarity).</text>
</comment>
<comment type="subcellular location">
    <subcellularLocation>
        <location evidence="3">Cytoplasm</location>
    </subcellularLocation>
    <subcellularLocation>
        <location evidence="3">Nucleus</location>
    </subcellularLocation>
</comment>
<comment type="similarity">
    <text evidence="4">Belongs to the carbon-nitrogen hydrolase superfamily.</text>
</comment>
<gene>
    <name type="primary">nta1</name>
    <name type="ORF">SPBC23E6.03c</name>
</gene>
<feature type="chain" id="PRO_0000314759" description="Protein N-terminal amidase">
    <location>
        <begin position="1"/>
        <end position="286"/>
    </location>
</feature>
<feature type="domain" description="CN hydrolase" evidence="2">
    <location>
        <begin position="1"/>
        <end position="286"/>
    </location>
</feature>
<feature type="active site" description="Proton acceptor" evidence="2">
    <location>
        <position position="43"/>
    </location>
</feature>
<feature type="active site" description="Proton donor" evidence="2">
    <location>
        <position position="121"/>
    </location>
</feature>
<feature type="active site" description="Nucleophile" evidence="2">
    <location>
        <position position="155"/>
    </location>
</feature>
<sequence length="286" mass="32427">MKFGCVQFFPKLGKVNENIVHLRQLLDQHSEALQSVKLLVFPEMCLTGYNFKNSESIQPFLENVTSNHCPSIQFAQEVSEQYRCYTIIGFPEFQNSNGISTLYNSTALISPKKELLNVYHKHFLFETDKSWATEGKGFSFEPCIPELGPISMAICMDINPYDFKAPFEKFEYANFILRELEHQQMVSSNVSRPIICLSMAWLVSDDKVIDASLPDIKNLHYWTTRLSPLINSNTDAIVLVANRWGKENDLNFSGTSCIMELSQGRAILHGVLKAAENGIVVGELEK</sequence>
<organism>
    <name type="scientific">Schizosaccharomyces pombe (strain 972 / ATCC 24843)</name>
    <name type="common">Fission yeast</name>
    <dbReference type="NCBI Taxonomy" id="284812"/>
    <lineage>
        <taxon>Eukaryota</taxon>
        <taxon>Fungi</taxon>
        <taxon>Dikarya</taxon>
        <taxon>Ascomycota</taxon>
        <taxon>Taphrinomycotina</taxon>
        <taxon>Schizosaccharomycetes</taxon>
        <taxon>Schizosaccharomycetales</taxon>
        <taxon>Schizosaccharomycetaceae</taxon>
        <taxon>Schizosaccharomyces</taxon>
    </lineage>
</organism>
<evidence type="ECO:0000250" key="1"/>
<evidence type="ECO:0000255" key="2">
    <source>
        <dbReference type="PROSITE-ProRule" id="PRU00054"/>
    </source>
</evidence>
<evidence type="ECO:0000269" key="3">
    <source>
    </source>
</evidence>
<evidence type="ECO:0000305" key="4"/>
<accession>O60178</accession>
<protein>
    <recommendedName>
        <fullName>Protein N-terminal amidase</fullName>
        <shortName>NT-amidase</shortName>
        <ecNumber>3.5.1.-</ecNumber>
    </recommendedName>
</protein>
<name>NTA1_SCHPO</name>
<reference key="1">
    <citation type="journal article" date="2002" name="Nature">
        <title>The genome sequence of Schizosaccharomyces pombe.</title>
        <authorList>
            <person name="Wood V."/>
            <person name="Gwilliam R."/>
            <person name="Rajandream M.A."/>
            <person name="Lyne M.H."/>
            <person name="Lyne R."/>
            <person name="Stewart A."/>
            <person name="Sgouros J.G."/>
            <person name="Peat N."/>
            <person name="Hayles J."/>
            <person name="Baker S.G."/>
            <person name="Basham D."/>
            <person name="Bowman S."/>
            <person name="Brooks K."/>
            <person name="Brown D."/>
            <person name="Brown S."/>
            <person name="Chillingworth T."/>
            <person name="Churcher C.M."/>
            <person name="Collins M."/>
            <person name="Connor R."/>
            <person name="Cronin A."/>
            <person name="Davis P."/>
            <person name="Feltwell T."/>
            <person name="Fraser A."/>
            <person name="Gentles S."/>
            <person name="Goble A."/>
            <person name="Hamlin N."/>
            <person name="Harris D.E."/>
            <person name="Hidalgo J."/>
            <person name="Hodgson G."/>
            <person name="Holroyd S."/>
            <person name="Hornsby T."/>
            <person name="Howarth S."/>
            <person name="Huckle E.J."/>
            <person name="Hunt S."/>
            <person name="Jagels K."/>
            <person name="James K.D."/>
            <person name="Jones L."/>
            <person name="Jones M."/>
            <person name="Leather S."/>
            <person name="McDonald S."/>
            <person name="McLean J."/>
            <person name="Mooney P."/>
            <person name="Moule S."/>
            <person name="Mungall K.L."/>
            <person name="Murphy L.D."/>
            <person name="Niblett D."/>
            <person name="Odell C."/>
            <person name="Oliver K."/>
            <person name="O'Neil S."/>
            <person name="Pearson D."/>
            <person name="Quail M.A."/>
            <person name="Rabbinowitsch E."/>
            <person name="Rutherford K.M."/>
            <person name="Rutter S."/>
            <person name="Saunders D."/>
            <person name="Seeger K."/>
            <person name="Sharp S."/>
            <person name="Skelton J."/>
            <person name="Simmonds M.N."/>
            <person name="Squares R."/>
            <person name="Squares S."/>
            <person name="Stevens K."/>
            <person name="Taylor K."/>
            <person name="Taylor R.G."/>
            <person name="Tivey A."/>
            <person name="Walsh S.V."/>
            <person name="Warren T."/>
            <person name="Whitehead S."/>
            <person name="Woodward J.R."/>
            <person name="Volckaert G."/>
            <person name="Aert R."/>
            <person name="Robben J."/>
            <person name="Grymonprez B."/>
            <person name="Weltjens I."/>
            <person name="Vanstreels E."/>
            <person name="Rieger M."/>
            <person name="Schaefer M."/>
            <person name="Mueller-Auer S."/>
            <person name="Gabel C."/>
            <person name="Fuchs M."/>
            <person name="Duesterhoeft A."/>
            <person name="Fritzc C."/>
            <person name="Holzer E."/>
            <person name="Moestl D."/>
            <person name="Hilbert H."/>
            <person name="Borzym K."/>
            <person name="Langer I."/>
            <person name="Beck A."/>
            <person name="Lehrach H."/>
            <person name="Reinhardt R."/>
            <person name="Pohl T.M."/>
            <person name="Eger P."/>
            <person name="Zimmermann W."/>
            <person name="Wedler H."/>
            <person name="Wambutt R."/>
            <person name="Purnelle B."/>
            <person name="Goffeau A."/>
            <person name="Cadieu E."/>
            <person name="Dreano S."/>
            <person name="Gloux S."/>
            <person name="Lelaure V."/>
            <person name="Mottier S."/>
            <person name="Galibert F."/>
            <person name="Aves S.J."/>
            <person name="Xiang Z."/>
            <person name="Hunt C."/>
            <person name="Moore K."/>
            <person name="Hurst S.M."/>
            <person name="Lucas M."/>
            <person name="Rochet M."/>
            <person name="Gaillardin C."/>
            <person name="Tallada V.A."/>
            <person name="Garzon A."/>
            <person name="Thode G."/>
            <person name="Daga R.R."/>
            <person name="Cruzado L."/>
            <person name="Jimenez J."/>
            <person name="Sanchez M."/>
            <person name="del Rey F."/>
            <person name="Benito J."/>
            <person name="Dominguez A."/>
            <person name="Revuelta J.L."/>
            <person name="Moreno S."/>
            <person name="Armstrong J."/>
            <person name="Forsburg S.L."/>
            <person name="Cerutti L."/>
            <person name="Lowe T."/>
            <person name="McCombie W.R."/>
            <person name="Paulsen I."/>
            <person name="Potashkin J."/>
            <person name="Shpakovski G.V."/>
            <person name="Ussery D."/>
            <person name="Barrell B.G."/>
            <person name="Nurse P."/>
        </authorList>
    </citation>
    <scope>NUCLEOTIDE SEQUENCE [LARGE SCALE GENOMIC DNA]</scope>
    <source>
        <strain>972 / ATCC 24843</strain>
    </source>
</reference>
<reference key="2">
    <citation type="journal article" date="2006" name="Nat. Biotechnol.">
        <title>ORFeome cloning and global analysis of protein localization in the fission yeast Schizosaccharomyces pombe.</title>
        <authorList>
            <person name="Matsuyama A."/>
            <person name="Arai R."/>
            <person name="Yashiroda Y."/>
            <person name="Shirai A."/>
            <person name="Kamata A."/>
            <person name="Sekido S."/>
            <person name="Kobayashi Y."/>
            <person name="Hashimoto A."/>
            <person name="Hamamoto M."/>
            <person name="Hiraoka Y."/>
            <person name="Horinouchi S."/>
            <person name="Yoshida M."/>
        </authorList>
    </citation>
    <scope>SUBCELLULAR LOCATION [LARGE SCALE ANALYSIS]</scope>
</reference>
<dbReference type="EC" id="3.5.1.-"/>
<dbReference type="EMBL" id="CU329671">
    <property type="protein sequence ID" value="CAA18871.1"/>
    <property type="molecule type" value="Genomic_DNA"/>
</dbReference>
<dbReference type="PIR" id="T39937">
    <property type="entry name" value="T39937"/>
</dbReference>
<dbReference type="RefSeq" id="NP_596603.1">
    <property type="nucleotide sequence ID" value="NM_001022524.2"/>
</dbReference>
<dbReference type="SMR" id="O60178"/>
<dbReference type="BioGRID" id="277186">
    <property type="interactions" value="12"/>
</dbReference>
<dbReference type="FunCoup" id="O60178">
    <property type="interactions" value="6"/>
</dbReference>
<dbReference type="STRING" id="284812.O60178"/>
<dbReference type="PaxDb" id="4896-SPBC23E6.03c.1"/>
<dbReference type="EnsemblFungi" id="SPBC23E6.03c.1">
    <property type="protein sequence ID" value="SPBC23E6.03c.1:pep"/>
    <property type="gene ID" value="SPBC23E6.03c"/>
</dbReference>
<dbReference type="GeneID" id="2540661"/>
<dbReference type="KEGG" id="spo:2540661"/>
<dbReference type="PomBase" id="SPBC23E6.03c">
    <property type="gene designation" value="nta1"/>
</dbReference>
<dbReference type="VEuPathDB" id="FungiDB:SPBC23E6.03c"/>
<dbReference type="eggNOG" id="KOG0806">
    <property type="taxonomic scope" value="Eukaryota"/>
</dbReference>
<dbReference type="HOGENOM" id="CLU_009854_1_1_1"/>
<dbReference type="InParanoid" id="O60178"/>
<dbReference type="OMA" id="VKILCWD"/>
<dbReference type="PhylomeDB" id="O60178"/>
<dbReference type="PRO" id="PR:O60178"/>
<dbReference type="Proteomes" id="UP000002485">
    <property type="component" value="Chromosome II"/>
</dbReference>
<dbReference type="GO" id="GO:0005737">
    <property type="term" value="C:cytoplasm"/>
    <property type="evidence" value="ECO:0007005"/>
    <property type="project" value="PomBase"/>
</dbReference>
<dbReference type="GO" id="GO:0005829">
    <property type="term" value="C:cytosol"/>
    <property type="evidence" value="ECO:0007005"/>
    <property type="project" value="PomBase"/>
</dbReference>
<dbReference type="GO" id="GO:0005739">
    <property type="term" value="C:mitochondrion"/>
    <property type="evidence" value="ECO:0000266"/>
    <property type="project" value="PomBase"/>
</dbReference>
<dbReference type="GO" id="GO:0005634">
    <property type="term" value="C:nucleus"/>
    <property type="evidence" value="ECO:0007005"/>
    <property type="project" value="PomBase"/>
</dbReference>
<dbReference type="GO" id="GO:0008418">
    <property type="term" value="F:protein-N-terminal asparagine amidohydrolase activity"/>
    <property type="evidence" value="ECO:0000318"/>
    <property type="project" value="GO_Central"/>
</dbReference>
<dbReference type="GO" id="GO:0070773">
    <property type="term" value="F:protein-N-terminal glutamine amidohydrolase activity"/>
    <property type="evidence" value="ECO:0000318"/>
    <property type="project" value="GO_Central"/>
</dbReference>
<dbReference type="GO" id="GO:0035694">
    <property type="term" value="P:mitochondrial protein catabolic process"/>
    <property type="evidence" value="ECO:0000266"/>
    <property type="project" value="PomBase"/>
</dbReference>
<dbReference type="GO" id="GO:0030163">
    <property type="term" value="P:protein catabolic process"/>
    <property type="evidence" value="ECO:0000318"/>
    <property type="project" value="GO_Central"/>
</dbReference>
<dbReference type="GO" id="GO:0036211">
    <property type="term" value="P:protein modification process"/>
    <property type="evidence" value="ECO:0000318"/>
    <property type="project" value="GO_Central"/>
</dbReference>
<dbReference type="Gene3D" id="3.60.110.10">
    <property type="entry name" value="Carbon-nitrogen hydrolase"/>
    <property type="match status" value="1"/>
</dbReference>
<dbReference type="InterPro" id="IPR003010">
    <property type="entry name" value="C-N_Hydrolase"/>
</dbReference>
<dbReference type="InterPro" id="IPR036526">
    <property type="entry name" value="C-N_Hydrolase_sf"/>
</dbReference>
<dbReference type="InterPro" id="IPR039703">
    <property type="entry name" value="Nta1"/>
</dbReference>
<dbReference type="PANTHER" id="PTHR11750">
    <property type="entry name" value="PROTEIN N-TERMINAL AMIDASE"/>
    <property type="match status" value="1"/>
</dbReference>
<dbReference type="PANTHER" id="PTHR11750:SF26">
    <property type="entry name" value="PROTEIN N-TERMINAL AMIDASE"/>
    <property type="match status" value="1"/>
</dbReference>
<dbReference type="Pfam" id="PF00795">
    <property type="entry name" value="CN_hydrolase"/>
    <property type="match status" value="1"/>
</dbReference>
<dbReference type="SUPFAM" id="SSF56317">
    <property type="entry name" value="Carbon-nitrogen hydrolase"/>
    <property type="match status" value="1"/>
</dbReference>
<dbReference type="PROSITE" id="PS50263">
    <property type="entry name" value="CN_HYDROLASE"/>
    <property type="match status" value="1"/>
</dbReference>
<keyword id="KW-0963">Cytoplasm</keyword>
<keyword id="KW-0378">Hydrolase</keyword>
<keyword id="KW-0539">Nucleus</keyword>
<keyword id="KW-1185">Reference proteome</keyword>